<name>URE1_SULTO</name>
<sequence>MRISRERYFELYGPTEGDKIRLGDTNLYITIEKDLIAKGDELVFGAGKTARDGLGLLPNVREEEVMDLIITNVVILDPLLGVIKADIGIKDGLIVGIGHGGNPFTMDGVNFVLGSSTEIISGEGLIATPGFIDTHIHWVAPQQVFDALSAGFTTLIGGGTGPAEGTKATTVTPGSWNIKIIAESLDYFPLNFALTAKGSSSRITMEEVLRNGASGFKIHEDWGAMPRVIDETLTVADEYDVQVTIHTDTSNESGYLEDTLNAINGRTIHAYHVEGAGGGHAPDIIKICAEPNVLPSSTNPTKPYTIHTYEEHLEMLMAVHHLNPKVPEDVAYAESRIREETMMAEDYLHDLGAISMMSSDSQAMGRVGETGIRTFQLAHKMKDLGLIQINDNERVLRYLAKITINPAITHGISDYVGTLAPGHIADIVLWDPRFFPVKPYMVIKGGAITWALMGDTNASIAYAQPVLYKPMFGYYSAKSVSFFFSATDGVENLSKIVRRRVLPVKNTRHLTKKDMKYNDILPKIEVNPDTYEVKINGIVPKVPPSKSLPLTQLYFIY</sequence>
<dbReference type="EC" id="3.5.1.5" evidence="1"/>
<dbReference type="EMBL" id="BA000023">
    <property type="protein sequence ID" value="BAB66053.1"/>
    <property type="status" value="ALT_INIT"/>
    <property type="molecule type" value="Genomic_DNA"/>
</dbReference>
<dbReference type="RefSeq" id="WP_010979035.1">
    <property type="nucleotide sequence ID" value="NC_003106.2"/>
</dbReference>
<dbReference type="SMR" id="Q972W0"/>
<dbReference type="STRING" id="273063.STK_10280"/>
<dbReference type="GeneID" id="1459007"/>
<dbReference type="KEGG" id="sto:STK_10280"/>
<dbReference type="PATRIC" id="fig|273063.9.peg.1156"/>
<dbReference type="eggNOG" id="arCOG00698">
    <property type="taxonomic scope" value="Archaea"/>
</dbReference>
<dbReference type="OrthoDB" id="42542at2157"/>
<dbReference type="UniPathway" id="UPA00258">
    <property type="reaction ID" value="UER00370"/>
</dbReference>
<dbReference type="Proteomes" id="UP000001015">
    <property type="component" value="Chromosome"/>
</dbReference>
<dbReference type="GO" id="GO:0005737">
    <property type="term" value="C:cytoplasm"/>
    <property type="evidence" value="ECO:0007669"/>
    <property type="project" value="UniProtKB-SubCell"/>
</dbReference>
<dbReference type="GO" id="GO:0016151">
    <property type="term" value="F:nickel cation binding"/>
    <property type="evidence" value="ECO:0007669"/>
    <property type="project" value="UniProtKB-UniRule"/>
</dbReference>
<dbReference type="GO" id="GO:0009039">
    <property type="term" value="F:urease activity"/>
    <property type="evidence" value="ECO:0007669"/>
    <property type="project" value="UniProtKB-UniRule"/>
</dbReference>
<dbReference type="GO" id="GO:0043419">
    <property type="term" value="P:urea catabolic process"/>
    <property type="evidence" value="ECO:0007669"/>
    <property type="project" value="UniProtKB-UniRule"/>
</dbReference>
<dbReference type="Gene3D" id="3.20.20.140">
    <property type="entry name" value="Metal-dependent hydrolases"/>
    <property type="match status" value="1"/>
</dbReference>
<dbReference type="Gene3D" id="2.30.40.10">
    <property type="entry name" value="Urease, subunit C, domain 1"/>
    <property type="match status" value="1"/>
</dbReference>
<dbReference type="HAMAP" id="MF_01953">
    <property type="entry name" value="Urease_alpha"/>
    <property type="match status" value="1"/>
</dbReference>
<dbReference type="InterPro" id="IPR006680">
    <property type="entry name" value="Amidohydro-rel"/>
</dbReference>
<dbReference type="InterPro" id="IPR011059">
    <property type="entry name" value="Metal-dep_hydrolase_composite"/>
</dbReference>
<dbReference type="InterPro" id="IPR032466">
    <property type="entry name" value="Metal_Hydrolase"/>
</dbReference>
<dbReference type="InterPro" id="IPR011612">
    <property type="entry name" value="Urease_alpha_N_dom"/>
</dbReference>
<dbReference type="InterPro" id="IPR050112">
    <property type="entry name" value="Urease_alpha_subunit"/>
</dbReference>
<dbReference type="InterPro" id="IPR005848">
    <property type="entry name" value="Urease_asu"/>
</dbReference>
<dbReference type="InterPro" id="IPR017951">
    <property type="entry name" value="Urease_asu_c"/>
</dbReference>
<dbReference type="NCBIfam" id="NF009686">
    <property type="entry name" value="PRK13207.1"/>
    <property type="match status" value="1"/>
</dbReference>
<dbReference type="NCBIfam" id="TIGR01792">
    <property type="entry name" value="urease_alph"/>
    <property type="match status" value="1"/>
</dbReference>
<dbReference type="PANTHER" id="PTHR43440">
    <property type="entry name" value="UREASE"/>
    <property type="match status" value="1"/>
</dbReference>
<dbReference type="PANTHER" id="PTHR43440:SF1">
    <property type="entry name" value="UREASE"/>
    <property type="match status" value="1"/>
</dbReference>
<dbReference type="Pfam" id="PF01979">
    <property type="entry name" value="Amidohydro_1"/>
    <property type="match status" value="1"/>
</dbReference>
<dbReference type="Pfam" id="PF00449">
    <property type="entry name" value="Urease_alpha"/>
    <property type="match status" value="1"/>
</dbReference>
<dbReference type="PRINTS" id="PR01752">
    <property type="entry name" value="UREASE"/>
</dbReference>
<dbReference type="SUPFAM" id="SSF51338">
    <property type="entry name" value="Composite domain of metallo-dependent hydrolases"/>
    <property type="match status" value="1"/>
</dbReference>
<dbReference type="SUPFAM" id="SSF51556">
    <property type="entry name" value="Metallo-dependent hydrolases"/>
    <property type="match status" value="1"/>
</dbReference>
<dbReference type="PROSITE" id="PS51368">
    <property type="entry name" value="UREASE_3"/>
    <property type="match status" value="1"/>
</dbReference>
<accession>Q972W0</accession>
<comment type="catalytic activity">
    <reaction evidence="1">
        <text>urea + 2 H2O + H(+) = hydrogencarbonate + 2 NH4(+)</text>
        <dbReference type="Rhea" id="RHEA:20557"/>
        <dbReference type="ChEBI" id="CHEBI:15377"/>
        <dbReference type="ChEBI" id="CHEBI:15378"/>
        <dbReference type="ChEBI" id="CHEBI:16199"/>
        <dbReference type="ChEBI" id="CHEBI:17544"/>
        <dbReference type="ChEBI" id="CHEBI:28938"/>
        <dbReference type="EC" id="3.5.1.5"/>
    </reaction>
</comment>
<comment type="cofactor">
    <cofactor evidence="1">
        <name>Ni cation</name>
        <dbReference type="ChEBI" id="CHEBI:25516"/>
    </cofactor>
    <text evidence="1">Binds 2 nickel ions per subunit.</text>
</comment>
<comment type="pathway">
    <text evidence="1">Nitrogen metabolism; urea degradation; CO(2) and NH(3) from urea (urease route): step 1/1.</text>
</comment>
<comment type="subunit">
    <text evidence="1">Heterohexamer of 3 UreC (alpha) and 3 UreAB (gamma/beta) subunits.</text>
</comment>
<comment type="subcellular location">
    <subcellularLocation>
        <location evidence="1">Cytoplasm</location>
    </subcellularLocation>
</comment>
<comment type="PTM">
    <text evidence="1">Carboxylation allows a single lysine to coordinate two nickel ions.</text>
</comment>
<comment type="similarity">
    <text evidence="1">Belongs to the metallo-dependent hydrolases superfamily. Urease alpha subunit family.</text>
</comment>
<comment type="sequence caution" evidence="2">
    <conflict type="erroneous initiation">
        <sequence resource="EMBL-CDS" id="BAB66053"/>
    </conflict>
</comment>
<keyword id="KW-0963">Cytoplasm</keyword>
<keyword id="KW-0378">Hydrolase</keyword>
<keyword id="KW-0479">Metal-binding</keyword>
<keyword id="KW-0533">Nickel</keyword>
<keyword id="KW-1185">Reference proteome</keyword>
<feature type="chain" id="PRO_0000234195" description="Urease subunit alpha">
    <location>
        <begin position="1"/>
        <end position="557"/>
    </location>
</feature>
<feature type="domain" description="Urease" evidence="1">
    <location>
        <begin position="130"/>
        <end position="557"/>
    </location>
</feature>
<feature type="active site" description="Proton donor" evidence="1">
    <location>
        <position position="320"/>
    </location>
</feature>
<feature type="binding site" evidence="1">
    <location>
        <position position="135"/>
    </location>
    <ligand>
        <name>Ni(2+)</name>
        <dbReference type="ChEBI" id="CHEBI:49786"/>
        <label>1</label>
    </ligand>
</feature>
<feature type="binding site" evidence="1">
    <location>
        <position position="137"/>
    </location>
    <ligand>
        <name>Ni(2+)</name>
        <dbReference type="ChEBI" id="CHEBI:49786"/>
        <label>1</label>
    </ligand>
</feature>
<feature type="binding site" description="via carbamate group" evidence="1">
    <location>
        <position position="217"/>
    </location>
    <ligand>
        <name>Ni(2+)</name>
        <dbReference type="ChEBI" id="CHEBI:49786"/>
        <label>1</label>
    </ligand>
</feature>
<feature type="binding site" description="via carbamate group" evidence="1">
    <location>
        <position position="217"/>
    </location>
    <ligand>
        <name>Ni(2+)</name>
        <dbReference type="ChEBI" id="CHEBI:49786"/>
        <label>2</label>
    </ligand>
</feature>
<feature type="binding site" evidence="1">
    <location>
        <position position="219"/>
    </location>
    <ligand>
        <name>substrate</name>
    </ligand>
</feature>
<feature type="binding site" evidence="1">
    <location>
        <position position="246"/>
    </location>
    <ligand>
        <name>Ni(2+)</name>
        <dbReference type="ChEBI" id="CHEBI:49786"/>
        <label>2</label>
    </ligand>
</feature>
<feature type="binding site" evidence="1">
    <location>
        <position position="272"/>
    </location>
    <ligand>
        <name>Ni(2+)</name>
        <dbReference type="ChEBI" id="CHEBI:49786"/>
        <label>2</label>
    </ligand>
</feature>
<feature type="binding site" evidence="1">
    <location>
        <position position="360"/>
    </location>
    <ligand>
        <name>Ni(2+)</name>
        <dbReference type="ChEBI" id="CHEBI:49786"/>
        <label>1</label>
    </ligand>
</feature>
<feature type="modified residue" description="N6-carboxylysine" evidence="1">
    <location>
        <position position="217"/>
    </location>
</feature>
<reference key="1">
    <citation type="journal article" date="2001" name="DNA Res.">
        <title>Complete genome sequence of an aerobic thermoacidophilic Crenarchaeon, Sulfolobus tokodaii strain7.</title>
        <authorList>
            <person name="Kawarabayasi Y."/>
            <person name="Hino Y."/>
            <person name="Horikawa H."/>
            <person name="Jin-no K."/>
            <person name="Takahashi M."/>
            <person name="Sekine M."/>
            <person name="Baba S."/>
            <person name="Ankai A."/>
            <person name="Kosugi H."/>
            <person name="Hosoyama A."/>
            <person name="Fukui S."/>
            <person name="Nagai Y."/>
            <person name="Nishijima K."/>
            <person name="Otsuka R."/>
            <person name="Nakazawa H."/>
            <person name="Takamiya M."/>
            <person name="Kato Y."/>
            <person name="Yoshizawa T."/>
            <person name="Tanaka T."/>
            <person name="Kudoh Y."/>
            <person name="Yamazaki J."/>
            <person name="Kushida N."/>
            <person name="Oguchi A."/>
            <person name="Aoki K."/>
            <person name="Masuda S."/>
            <person name="Yanagii M."/>
            <person name="Nishimura M."/>
            <person name="Yamagishi A."/>
            <person name="Oshima T."/>
            <person name="Kikuchi H."/>
        </authorList>
    </citation>
    <scope>NUCLEOTIDE SEQUENCE [LARGE SCALE GENOMIC DNA]</scope>
    <source>
        <strain>DSM 16993 / JCM 10545 / NBRC 100140 / 7</strain>
    </source>
</reference>
<organism>
    <name type="scientific">Sulfurisphaera tokodaii (strain DSM 16993 / JCM 10545 / NBRC 100140 / 7)</name>
    <name type="common">Sulfolobus tokodaii</name>
    <dbReference type="NCBI Taxonomy" id="273063"/>
    <lineage>
        <taxon>Archaea</taxon>
        <taxon>Thermoproteota</taxon>
        <taxon>Thermoprotei</taxon>
        <taxon>Sulfolobales</taxon>
        <taxon>Sulfolobaceae</taxon>
        <taxon>Sulfurisphaera</taxon>
    </lineage>
</organism>
<proteinExistence type="inferred from homology"/>
<gene>
    <name evidence="1" type="primary">ureC</name>
    <name type="ordered locus">STK_10280</name>
</gene>
<evidence type="ECO:0000255" key="1">
    <source>
        <dbReference type="HAMAP-Rule" id="MF_01953"/>
    </source>
</evidence>
<evidence type="ECO:0000305" key="2"/>
<protein>
    <recommendedName>
        <fullName evidence="1">Urease subunit alpha</fullName>
        <ecNumber evidence="1">3.5.1.5</ecNumber>
    </recommendedName>
    <alternativeName>
        <fullName evidence="1">Urea amidohydrolase subunit alpha</fullName>
    </alternativeName>
</protein>